<reference key="1">
    <citation type="journal article" date="2007" name="Microbiology">
        <title>Comparative analysis of the Corynebacterium glutamicum group and complete genome sequence of strain R.</title>
        <authorList>
            <person name="Yukawa H."/>
            <person name="Omumasaba C.A."/>
            <person name="Nonaka H."/>
            <person name="Kos P."/>
            <person name="Okai N."/>
            <person name="Suzuki N."/>
            <person name="Suda M."/>
            <person name="Tsuge Y."/>
            <person name="Watanabe J."/>
            <person name="Ikeda Y."/>
            <person name="Vertes A.A."/>
            <person name="Inui M."/>
        </authorList>
    </citation>
    <scope>NUCLEOTIDE SEQUENCE [LARGE SCALE GENOMIC DNA]</scope>
    <source>
        <strain>R</strain>
    </source>
</reference>
<accession>A4QDH2</accession>
<evidence type="ECO:0000255" key="1">
    <source>
        <dbReference type="HAMAP-Rule" id="MF_00815"/>
    </source>
</evidence>
<dbReference type="EMBL" id="AP009044">
    <property type="protein sequence ID" value="BAF54269.1"/>
    <property type="molecule type" value="Genomic_DNA"/>
</dbReference>
<dbReference type="RefSeq" id="WP_003854841.1">
    <property type="nucleotide sequence ID" value="NC_009342.1"/>
</dbReference>
<dbReference type="SMR" id="A4QDH2"/>
<dbReference type="KEGG" id="cgt:cgR_1289"/>
<dbReference type="HOGENOM" id="CLU_050669_0_0_11"/>
<dbReference type="PhylomeDB" id="A4QDH2"/>
<dbReference type="Proteomes" id="UP000006698">
    <property type="component" value="Chromosome"/>
</dbReference>
<dbReference type="GO" id="GO:0005886">
    <property type="term" value="C:plasma membrane"/>
    <property type="evidence" value="ECO:0007669"/>
    <property type="project" value="UniProtKB-SubCell"/>
</dbReference>
<dbReference type="GO" id="GO:0045259">
    <property type="term" value="C:proton-transporting ATP synthase complex"/>
    <property type="evidence" value="ECO:0007669"/>
    <property type="project" value="UniProtKB-KW"/>
</dbReference>
<dbReference type="GO" id="GO:0005524">
    <property type="term" value="F:ATP binding"/>
    <property type="evidence" value="ECO:0007669"/>
    <property type="project" value="UniProtKB-UniRule"/>
</dbReference>
<dbReference type="GO" id="GO:0046933">
    <property type="term" value="F:proton-transporting ATP synthase activity, rotational mechanism"/>
    <property type="evidence" value="ECO:0007669"/>
    <property type="project" value="UniProtKB-UniRule"/>
</dbReference>
<dbReference type="GO" id="GO:0042777">
    <property type="term" value="P:proton motive force-driven plasma membrane ATP synthesis"/>
    <property type="evidence" value="ECO:0007669"/>
    <property type="project" value="UniProtKB-UniRule"/>
</dbReference>
<dbReference type="CDD" id="cd12151">
    <property type="entry name" value="F1-ATPase_gamma"/>
    <property type="match status" value="1"/>
</dbReference>
<dbReference type="Gene3D" id="3.40.1380.10">
    <property type="match status" value="1"/>
</dbReference>
<dbReference type="Gene3D" id="1.10.287.80">
    <property type="entry name" value="ATP synthase, gamma subunit, helix hairpin domain"/>
    <property type="match status" value="2"/>
</dbReference>
<dbReference type="HAMAP" id="MF_00815">
    <property type="entry name" value="ATP_synth_gamma_bact"/>
    <property type="match status" value="1"/>
</dbReference>
<dbReference type="InterPro" id="IPR035968">
    <property type="entry name" value="ATP_synth_F1_ATPase_gsu"/>
</dbReference>
<dbReference type="InterPro" id="IPR000131">
    <property type="entry name" value="ATP_synth_F1_gsu"/>
</dbReference>
<dbReference type="InterPro" id="IPR023632">
    <property type="entry name" value="ATP_synth_F1_gsu_CS"/>
</dbReference>
<dbReference type="NCBIfam" id="TIGR01146">
    <property type="entry name" value="ATPsyn_F1gamma"/>
    <property type="match status" value="1"/>
</dbReference>
<dbReference type="NCBIfam" id="NF004145">
    <property type="entry name" value="PRK05621.1-2"/>
    <property type="match status" value="1"/>
</dbReference>
<dbReference type="PANTHER" id="PTHR11693">
    <property type="entry name" value="ATP SYNTHASE GAMMA CHAIN"/>
    <property type="match status" value="1"/>
</dbReference>
<dbReference type="PANTHER" id="PTHR11693:SF22">
    <property type="entry name" value="ATP SYNTHASE SUBUNIT GAMMA, MITOCHONDRIAL"/>
    <property type="match status" value="1"/>
</dbReference>
<dbReference type="Pfam" id="PF00231">
    <property type="entry name" value="ATP-synt"/>
    <property type="match status" value="1"/>
</dbReference>
<dbReference type="PRINTS" id="PR00126">
    <property type="entry name" value="ATPASEGAMMA"/>
</dbReference>
<dbReference type="SUPFAM" id="SSF52943">
    <property type="entry name" value="ATP synthase (F1-ATPase), gamma subunit"/>
    <property type="match status" value="1"/>
</dbReference>
<dbReference type="PROSITE" id="PS00153">
    <property type="entry name" value="ATPASE_GAMMA"/>
    <property type="match status" value="1"/>
</dbReference>
<proteinExistence type="inferred from homology"/>
<organism>
    <name type="scientific">Corynebacterium glutamicum (strain R)</name>
    <dbReference type="NCBI Taxonomy" id="340322"/>
    <lineage>
        <taxon>Bacteria</taxon>
        <taxon>Bacillati</taxon>
        <taxon>Actinomycetota</taxon>
        <taxon>Actinomycetes</taxon>
        <taxon>Mycobacteriales</taxon>
        <taxon>Corynebacteriaceae</taxon>
        <taxon>Corynebacterium</taxon>
    </lineage>
</organism>
<comment type="function">
    <text evidence="1">Produces ATP from ADP in the presence of a proton gradient across the membrane. The gamma chain is believed to be important in regulating ATPase activity and the flow of protons through the CF(0) complex.</text>
</comment>
<comment type="subunit">
    <text evidence="1">F-type ATPases have 2 components, CF(1) - the catalytic core - and CF(0) - the membrane proton channel. CF(1) has five subunits: alpha(3), beta(3), gamma(1), delta(1), epsilon(1). CF(0) has three main subunits: a, b and c.</text>
</comment>
<comment type="subcellular location">
    <subcellularLocation>
        <location evidence="1">Cell membrane</location>
        <topology evidence="1">Peripheral membrane protein</topology>
    </subcellularLocation>
</comment>
<comment type="similarity">
    <text evidence="1">Belongs to the ATPase gamma chain family.</text>
</comment>
<name>ATPG_CORGB</name>
<gene>
    <name evidence="1" type="primary">atpG</name>
    <name type="ordered locus">cgR_1289</name>
</gene>
<keyword id="KW-0066">ATP synthesis</keyword>
<keyword id="KW-1003">Cell membrane</keyword>
<keyword id="KW-0139">CF(1)</keyword>
<keyword id="KW-0375">Hydrogen ion transport</keyword>
<keyword id="KW-0406">Ion transport</keyword>
<keyword id="KW-0472">Membrane</keyword>
<keyword id="KW-0813">Transport</keyword>
<sequence>MATIRELRDRIRSVNSTKKITKAQELIATSRITKAQGRVAAAAPYAEEIQRVLERLASASSLDHPMLREREGGKRAAVLVVTSDRGMAGGYNHNVLKKAAELEKLLAESGYEVVRYVTGKKGVDYYKFRAEDVAGAWTGFSQDPDWAATHNVRRHLIDGFTASSEGEAAWREGLNLSEGQDIQGFDQVHVVYTEFISMLTQNPVVHQLLPVEPVIEDEIFEKGEDLLSSSGDVEPDYEFEPDADTLLEALLPQYVSRRLFSIFLEAAAAESASRRNAMKSATDNASELVKDLSRVANQARQAQITQEITEIVGGAGALADSGESD</sequence>
<protein>
    <recommendedName>
        <fullName evidence="1">ATP synthase gamma chain</fullName>
    </recommendedName>
    <alternativeName>
        <fullName evidence="1">ATP synthase F1 sector gamma subunit</fullName>
    </alternativeName>
    <alternativeName>
        <fullName evidence="1">F-ATPase gamma subunit</fullName>
    </alternativeName>
</protein>
<feature type="chain" id="PRO_1000053198" description="ATP synthase gamma chain">
    <location>
        <begin position="1"/>
        <end position="325"/>
    </location>
</feature>